<comment type="function">
    <text evidence="1">Involved in protein export. Acts as a chaperone by maintaining the newly synthesized protein in an open conformation. Functions as a peptidyl-prolyl cis-trans isomerase.</text>
</comment>
<comment type="catalytic activity">
    <reaction evidence="1">
        <text>[protein]-peptidylproline (omega=180) = [protein]-peptidylproline (omega=0)</text>
        <dbReference type="Rhea" id="RHEA:16237"/>
        <dbReference type="Rhea" id="RHEA-COMP:10747"/>
        <dbReference type="Rhea" id="RHEA-COMP:10748"/>
        <dbReference type="ChEBI" id="CHEBI:83833"/>
        <dbReference type="ChEBI" id="CHEBI:83834"/>
        <dbReference type="EC" id="5.2.1.8"/>
    </reaction>
</comment>
<comment type="subcellular location">
    <subcellularLocation>
        <location>Cytoplasm</location>
    </subcellularLocation>
    <text evidence="1">About half TF is bound to the ribosome near the polypeptide exit tunnel while the other half is free in the cytoplasm.</text>
</comment>
<comment type="domain">
    <text evidence="1">Consists of 3 domains; the N-terminus binds the ribosome, the middle domain has PPIase activity, while the C-terminus has intrinsic chaperone activity on its own.</text>
</comment>
<comment type="similarity">
    <text evidence="1">Belongs to the FKBP-type PPIase family. Tig subfamily.</text>
</comment>
<sequence>MAKDALIVKTTPLPQSRISFELEIPSETCKTCVNETINSISRSAKIPGFRLGKIPKQVLIQRIGITQLHASALEKIIDKSWQEALKIKSIEPLSEPELVDGFESLLAKFSPEKSLKVTLQTDVAPELKLKKSKGLSVEISKTKFDPKSIDEALEKSRNQFANIIPVTNRAAKLGDIAVVSFKGKYKDSGKEIDGGTSESMDLELEKNKMIPGFVEGIVKMKIGDTKTLNLKFPDDYSHEDSRGKEAIFEVNLKDLKEKELPELNDDFAKQSGNKESLKELKKDIEKQLKDNFEKTQKDIKIEALLDALTNELVAEIPKSMIDIEVRNNIEQTAQRFAQQGLDVKSTFTPELVKSLADSTRPQAEKNVQRNLALKALAETENIKVEQDEIDSKMKDYEDAISQSSKQIDIKKLTEVLTNDLLKEKLIIWLEENSEVKEKTTKTSKATKTSKTTKATKTASKTTKTTKTQNKKEKK</sequence>
<dbReference type="EC" id="5.2.1.8" evidence="1"/>
<dbReference type="EMBL" id="CP000551">
    <property type="protein sequence ID" value="ABM71147.1"/>
    <property type="molecule type" value="Genomic_DNA"/>
</dbReference>
<dbReference type="RefSeq" id="WP_011819265.1">
    <property type="nucleotide sequence ID" value="NC_008816.1"/>
</dbReference>
<dbReference type="SMR" id="A2BTN6"/>
<dbReference type="STRING" id="146891.A9601_18641"/>
<dbReference type="KEGG" id="pmb:A9601_18641"/>
<dbReference type="eggNOG" id="COG0544">
    <property type="taxonomic scope" value="Bacteria"/>
</dbReference>
<dbReference type="HOGENOM" id="CLU_033058_3_1_3"/>
<dbReference type="OrthoDB" id="9767721at2"/>
<dbReference type="Proteomes" id="UP000002590">
    <property type="component" value="Chromosome"/>
</dbReference>
<dbReference type="GO" id="GO:0005737">
    <property type="term" value="C:cytoplasm"/>
    <property type="evidence" value="ECO:0007669"/>
    <property type="project" value="UniProtKB-SubCell"/>
</dbReference>
<dbReference type="GO" id="GO:0003755">
    <property type="term" value="F:peptidyl-prolyl cis-trans isomerase activity"/>
    <property type="evidence" value="ECO:0007669"/>
    <property type="project" value="UniProtKB-UniRule"/>
</dbReference>
<dbReference type="GO" id="GO:0044183">
    <property type="term" value="F:protein folding chaperone"/>
    <property type="evidence" value="ECO:0007669"/>
    <property type="project" value="TreeGrafter"/>
</dbReference>
<dbReference type="GO" id="GO:0043022">
    <property type="term" value="F:ribosome binding"/>
    <property type="evidence" value="ECO:0007669"/>
    <property type="project" value="TreeGrafter"/>
</dbReference>
<dbReference type="GO" id="GO:0051083">
    <property type="term" value="P:'de novo' cotranslational protein folding"/>
    <property type="evidence" value="ECO:0007669"/>
    <property type="project" value="TreeGrafter"/>
</dbReference>
<dbReference type="GO" id="GO:0051301">
    <property type="term" value="P:cell division"/>
    <property type="evidence" value="ECO:0007669"/>
    <property type="project" value="UniProtKB-KW"/>
</dbReference>
<dbReference type="GO" id="GO:0061077">
    <property type="term" value="P:chaperone-mediated protein folding"/>
    <property type="evidence" value="ECO:0007669"/>
    <property type="project" value="TreeGrafter"/>
</dbReference>
<dbReference type="GO" id="GO:0015031">
    <property type="term" value="P:protein transport"/>
    <property type="evidence" value="ECO:0007669"/>
    <property type="project" value="UniProtKB-UniRule"/>
</dbReference>
<dbReference type="GO" id="GO:0043335">
    <property type="term" value="P:protein unfolding"/>
    <property type="evidence" value="ECO:0007669"/>
    <property type="project" value="TreeGrafter"/>
</dbReference>
<dbReference type="FunFam" id="3.10.50.40:FF:000001">
    <property type="entry name" value="Trigger factor"/>
    <property type="match status" value="1"/>
</dbReference>
<dbReference type="FunFam" id="3.30.70.1050:FF:000004">
    <property type="entry name" value="Trigger factor"/>
    <property type="match status" value="1"/>
</dbReference>
<dbReference type="Gene3D" id="3.10.50.40">
    <property type="match status" value="1"/>
</dbReference>
<dbReference type="Gene3D" id="3.30.70.1050">
    <property type="entry name" value="Trigger factor ribosome-binding domain"/>
    <property type="match status" value="1"/>
</dbReference>
<dbReference type="Gene3D" id="1.10.3120.10">
    <property type="entry name" value="Trigger factor, C-terminal domain"/>
    <property type="match status" value="1"/>
</dbReference>
<dbReference type="HAMAP" id="MF_00303">
    <property type="entry name" value="Trigger_factor_Tig"/>
    <property type="match status" value="1"/>
</dbReference>
<dbReference type="InterPro" id="IPR046357">
    <property type="entry name" value="PPIase_dom_sf"/>
</dbReference>
<dbReference type="InterPro" id="IPR001179">
    <property type="entry name" value="PPIase_FKBP_dom"/>
</dbReference>
<dbReference type="InterPro" id="IPR005215">
    <property type="entry name" value="Trig_fac"/>
</dbReference>
<dbReference type="InterPro" id="IPR008880">
    <property type="entry name" value="Trigger_fac_C"/>
</dbReference>
<dbReference type="InterPro" id="IPR037041">
    <property type="entry name" value="Trigger_fac_C_sf"/>
</dbReference>
<dbReference type="InterPro" id="IPR008881">
    <property type="entry name" value="Trigger_fac_ribosome-bd_bac"/>
</dbReference>
<dbReference type="InterPro" id="IPR036611">
    <property type="entry name" value="Trigger_fac_ribosome-bd_sf"/>
</dbReference>
<dbReference type="InterPro" id="IPR027304">
    <property type="entry name" value="Trigger_fact/SurA_dom_sf"/>
</dbReference>
<dbReference type="NCBIfam" id="TIGR00115">
    <property type="entry name" value="tig"/>
    <property type="match status" value="1"/>
</dbReference>
<dbReference type="PANTHER" id="PTHR30560">
    <property type="entry name" value="TRIGGER FACTOR CHAPERONE AND PEPTIDYL-PROLYL CIS/TRANS ISOMERASE"/>
    <property type="match status" value="1"/>
</dbReference>
<dbReference type="PANTHER" id="PTHR30560:SF3">
    <property type="entry name" value="TRIGGER FACTOR-LIKE PROTEIN TIG, CHLOROPLASTIC"/>
    <property type="match status" value="1"/>
</dbReference>
<dbReference type="Pfam" id="PF00254">
    <property type="entry name" value="FKBP_C"/>
    <property type="match status" value="1"/>
</dbReference>
<dbReference type="Pfam" id="PF05698">
    <property type="entry name" value="Trigger_C"/>
    <property type="match status" value="1"/>
</dbReference>
<dbReference type="Pfam" id="PF05697">
    <property type="entry name" value="Trigger_N"/>
    <property type="match status" value="1"/>
</dbReference>
<dbReference type="PIRSF" id="PIRSF003095">
    <property type="entry name" value="Trigger_factor"/>
    <property type="match status" value="1"/>
</dbReference>
<dbReference type="SUPFAM" id="SSF54534">
    <property type="entry name" value="FKBP-like"/>
    <property type="match status" value="1"/>
</dbReference>
<dbReference type="SUPFAM" id="SSF109998">
    <property type="entry name" value="Triger factor/SurA peptide-binding domain-like"/>
    <property type="match status" value="1"/>
</dbReference>
<dbReference type="SUPFAM" id="SSF102735">
    <property type="entry name" value="Trigger factor ribosome-binding domain"/>
    <property type="match status" value="1"/>
</dbReference>
<dbReference type="PROSITE" id="PS50059">
    <property type="entry name" value="FKBP_PPIASE"/>
    <property type="match status" value="1"/>
</dbReference>
<protein>
    <recommendedName>
        <fullName evidence="1">Trigger factor</fullName>
        <shortName evidence="1">TF</shortName>
        <ecNumber evidence="1">5.2.1.8</ecNumber>
    </recommendedName>
    <alternativeName>
        <fullName evidence="1">PPIase</fullName>
    </alternativeName>
</protein>
<gene>
    <name evidence="1" type="primary">tig</name>
    <name type="ordered locus">A9601_18641</name>
</gene>
<proteinExistence type="inferred from homology"/>
<feature type="chain" id="PRO_1000022730" description="Trigger factor">
    <location>
        <begin position="1"/>
        <end position="474"/>
    </location>
</feature>
<feature type="domain" description="PPIase FKBP-type" evidence="1">
    <location>
        <begin position="174"/>
        <end position="261"/>
    </location>
</feature>
<feature type="region of interest" description="Disordered" evidence="2">
    <location>
        <begin position="435"/>
        <end position="474"/>
    </location>
</feature>
<feature type="compositionally biased region" description="Low complexity" evidence="2">
    <location>
        <begin position="442"/>
        <end position="467"/>
    </location>
</feature>
<accession>A2BTN6</accession>
<reference key="1">
    <citation type="journal article" date="2007" name="PLoS Genet.">
        <title>Patterns and implications of gene gain and loss in the evolution of Prochlorococcus.</title>
        <authorList>
            <person name="Kettler G.C."/>
            <person name="Martiny A.C."/>
            <person name="Huang K."/>
            <person name="Zucker J."/>
            <person name="Coleman M.L."/>
            <person name="Rodrigue S."/>
            <person name="Chen F."/>
            <person name="Lapidus A."/>
            <person name="Ferriera S."/>
            <person name="Johnson J."/>
            <person name="Steglich C."/>
            <person name="Church G.M."/>
            <person name="Richardson P."/>
            <person name="Chisholm S.W."/>
        </authorList>
    </citation>
    <scope>NUCLEOTIDE SEQUENCE [LARGE SCALE GENOMIC DNA]</scope>
    <source>
        <strain>AS9601</strain>
    </source>
</reference>
<name>TIG_PROMS</name>
<evidence type="ECO:0000255" key="1">
    <source>
        <dbReference type="HAMAP-Rule" id="MF_00303"/>
    </source>
</evidence>
<evidence type="ECO:0000256" key="2">
    <source>
        <dbReference type="SAM" id="MobiDB-lite"/>
    </source>
</evidence>
<keyword id="KW-0131">Cell cycle</keyword>
<keyword id="KW-0132">Cell division</keyword>
<keyword id="KW-0143">Chaperone</keyword>
<keyword id="KW-0963">Cytoplasm</keyword>
<keyword id="KW-0413">Isomerase</keyword>
<keyword id="KW-0697">Rotamase</keyword>
<organism>
    <name type="scientific">Prochlorococcus marinus (strain AS9601)</name>
    <dbReference type="NCBI Taxonomy" id="146891"/>
    <lineage>
        <taxon>Bacteria</taxon>
        <taxon>Bacillati</taxon>
        <taxon>Cyanobacteriota</taxon>
        <taxon>Cyanophyceae</taxon>
        <taxon>Synechococcales</taxon>
        <taxon>Prochlorococcaceae</taxon>
        <taxon>Prochlorococcus</taxon>
    </lineage>
</organism>